<accession>Q5XII9</accession>
<reference key="1">
    <citation type="journal article" date="2004" name="Genome Res.">
        <title>The status, quality, and expansion of the NIH full-length cDNA project: the Mammalian Gene Collection (MGC).</title>
        <authorList>
            <consortium name="The MGC Project Team"/>
        </authorList>
    </citation>
    <scope>NUCLEOTIDE SEQUENCE [LARGE SCALE MRNA]</scope>
    <source>
        <tissue>Heart</tissue>
    </source>
</reference>
<reference key="2">
    <citation type="journal article" date="2012" name="Nat. Commun.">
        <title>Quantitative maps of protein phosphorylation sites across 14 different rat organs and tissues.</title>
        <authorList>
            <person name="Lundby A."/>
            <person name="Secher A."/>
            <person name="Lage K."/>
            <person name="Nordsborg N.B."/>
            <person name="Dmytriyev A."/>
            <person name="Lundby C."/>
            <person name="Olsen J.V."/>
        </authorList>
    </citation>
    <scope>PHOSPHORYLATION [LARGE SCALE ANALYSIS] AT SER-235</scope>
    <scope>IDENTIFICATION BY MASS SPECTROMETRY [LARGE SCALE ANALYSIS]</scope>
</reference>
<sequence>MEANVTIPIWQNKPHGAARSVVRRIGTNLPLKPCPRASFETLPNISDLCLKDVPPVPTLADIAWIAADEEETYARVRSDTRPLRHTWKPSPLIVMQRNASVPNLRGSEERLLALKKPALPALSRTTELQDELSHLRSQIAKIVAADAASASLTPDFLSSGSSNVSSPLPCFGSSFHSTTSFVISDITEETEVEVPELPTIPLLCSASPECCKSEHKTTCSSSEEDDCISLSKASSFADMMGILKDFHRIKQSQDLSRSLLKEEDPAVLISEVLRRKFALKEEDISRKGN</sequence>
<feature type="chain" id="PRO_0000341568" description="Mitochondrial fission regulator 1-like">
    <location>
        <begin position="1"/>
        <end position="289"/>
    </location>
</feature>
<feature type="modified residue" description="Phosphothreonine" evidence="2">
    <location>
        <position position="27"/>
    </location>
</feature>
<feature type="modified residue" description="Phosphoserine" evidence="2">
    <location>
        <position position="38"/>
    </location>
</feature>
<feature type="modified residue" description="Phosphoserine" evidence="2">
    <location>
        <position position="100"/>
    </location>
</feature>
<feature type="modified residue" description="Phosphoserine" evidence="2">
    <location>
        <position position="107"/>
    </location>
</feature>
<feature type="modified residue" description="Phosphoserine" evidence="1">
    <location>
        <position position="221"/>
    </location>
</feature>
<feature type="modified residue" description="Phosphoserine" evidence="1">
    <location>
        <position position="222"/>
    </location>
</feature>
<feature type="modified residue" description="Phosphoserine" evidence="4">
    <location>
        <position position="235"/>
    </location>
</feature>
<feature type="modified residue" description="Phosphoserine" evidence="2">
    <location>
        <position position="258"/>
    </location>
</feature>
<feature type="modified residue" description="Phosphoserine" evidence="2">
    <location>
        <position position="270"/>
    </location>
</feature>
<proteinExistence type="evidence at protein level"/>
<dbReference type="EMBL" id="BC083692">
    <property type="protein sequence ID" value="AAH83692.1"/>
    <property type="molecule type" value="mRNA"/>
</dbReference>
<dbReference type="RefSeq" id="NP_001013957.1">
    <property type="nucleotide sequence ID" value="NM_001013935.1"/>
</dbReference>
<dbReference type="RefSeq" id="XP_006239186.1">
    <property type="nucleotide sequence ID" value="XM_006239124.2"/>
</dbReference>
<dbReference type="RefSeq" id="XP_006239187.1">
    <property type="nucleotide sequence ID" value="XM_006239125.5"/>
</dbReference>
<dbReference type="SMR" id="Q5XII9"/>
<dbReference type="FunCoup" id="Q5XII9">
    <property type="interactions" value="711"/>
</dbReference>
<dbReference type="STRING" id="10116.ENSRNOP00000022908"/>
<dbReference type="iPTMnet" id="Q5XII9"/>
<dbReference type="PhosphoSitePlus" id="Q5XII9"/>
<dbReference type="PaxDb" id="10116-ENSRNOP00000022908"/>
<dbReference type="GeneID" id="298549"/>
<dbReference type="KEGG" id="rno:298549"/>
<dbReference type="UCSC" id="RGD:1305453">
    <property type="organism name" value="rat"/>
</dbReference>
<dbReference type="AGR" id="RGD:1305453"/>
<dbReference type="CTD" id="56181"/>
<dbReference type="RGD" id="1305453">
    <property type="gene designation" value="Mtfr1l"/>
</dbReference>
<dbReference type="VEuPathDB" id="HostDB:ENSRNOG00000016937"/>
<dbReference type="eggNOG" id="ENOG502QRAC">
    <property type="taxonomic scope" value="Eukaryota"/>
</dbReference>
<dbReference type="HOGENOM" id="CLU_083041_0_0_1"/>
<dbReference type="InParanoid" id="Q5XII9"/>
<dbReference type="OrthoDB" id="58885at9989"/>
<dbReference type="PhylomeDB" id="Q5XII9"/>
<dbReference type="TreeFam" id="TF331404"/>
<dbReference type="PRO" id="PR:Q5XII9"/>
<dbReference type="Proteomes" id="UP000002494">
    <property type="component" value="Chromosome 5"/>
</dbReference>
<dbReference type="Bgee" id="ENSRNOG00000016937">
    <property type="expression patterns" value="Expressed in skeletal muscle tissue and 19 other cell types or tissues"/>
</dbReference>
<dbReference type="GO" id="GO:0005741">
    <property type="term" value="C:mitochondrial outer membrane"/>
    <property type="evidence" value="ECO:0007669"/>
    <property type="project" value="UniProtKB-SubCell"/>
</dbReference>
<dbReference type="GO" id="GO:0005739">
    <property type="term" value="C:mitochondrion"/>
    <property type="evidence" value="ECO:0000318"/>
    <property type="project" value="GO_Central"/>
</dbReference>
<dbReference type="GO" id="GO:0009060">
    <property type="term" value="P:aerobic respiration"/>
    <property type="evidence" value="ECO:0000318"/>
    <property type="project" value="GO_Central"/>
</dbReference>
<dbReference type="GO" id="GO:0000266">
    <property type="term" value="P:mitochondrial fission"/>
    <property type="evidence" value="ECO:0000318"/>
    <property type="project" value="GO_Central"/>
</dbReference>
<dbReference type="InterPro" id="IPR007972">
    <property type="entry name" value="Mtfr1"/>
</dbReference>
<dbReference type="PANTHER" id="PTHR14215:SF3">
    <property type="entry name" value="MITOCHONDRIAL FISSION REGULATOR 1-LIKE"/>
    <property type="match status" value="1"/>
</dbReference>
<dbReference type="PANTHER" id="PTHR14215">
    <property type="entry name" value="PROTEIN OF UNKNOWN FUNCTION DUF729"/>
    <property type="match status" value="1"/>
</dbReference>
<dbReference type="Pfam" id="PF05308">
    <property type="entry name" value="Mito_fiss_reg"/>
    <property type="match status" value="1"/>
</dbReference>
<protein>
    <recommendedName>
        <fullName>Mitochondrial fission regulator 1-like</fullName>
    </recommendedName>
</protein>
<name>MFR1L_RAT</name>
<keyword id="KW-0472">Membrane</keyword>
<keyword id="KW-0496">Mitochondrion</keyword>
<keyword id="KW-1000">Mitochondrion outer membrane</keyword>
<keyword id="KW-0597">Phosphoprotein</keyword>
<keyword id="KW-1185">Reference proteome</keyword>
<gene>
    <name type="primary">Mtfr1l</name>
    <name type="synonym">Fam54b</name>
</gene>
<evidence type="ECO:0000250" key="1">
    <source>
        <dbReference type="UniProtKB" id="Q9CWE0"/>
    </source>
</evidence>
<evidence type="ECO:0000250" key="2">
    <source>
        <dbReference type="UniProtKB" id="Q9H019"/>
    </source>
</evidence>
<evidence type="ECO:0000305" key="3"/>
<evidence type="ECO:0007744" key="4">
    <source>
    </source>
</evidence>
<comment type="function">
    <text evidence="2">Mitochondrial protein required for adaptation of miochondrial dynamics to metabolic changes. Regulates mitochondrial morphology at steady state and mediates AMPK-dependent stress-induced mitochondrial fragmentation via the control of OPA1 levels.</text>
</comment>
<comment type="subcellular location">
    <subcellularLocation>
        <location evidence="2">Mitochondrion outer membrane</location>
        <topology evidence="2">Peripheral membrane protein</topology>
        <orientation evidence="2">Cytoplasmic side</orientation>
    </subcellularLocation>
</comment>
<comment type="PTM">
    <text evidence="2">Phosphorylated by AMPK. Upon stress, phosphorylation by AMPK is sufficient to induce mitochondrial fragmentation.</text>
</comment>
<comment type="similarity">
    <text evidence="3">Belongs to the MTFR1 family.</text>
</comment>
<organism>
    <name type="scientific">Rattus norvegicus</name>
    <name type="common">Rat</name>
    <dbReference type="NCBI Taxonomy" id="10116"/>
    <lineage>
        <taxon>Eukaryota</taxon>
        <taxon>Metazoa</taxon>
        <taxon>Chordata</taxon>
        <taxon>Craniata</taxon>
        <taxon>Vertebrata</taxon>
        <taxon>Euteleostomi</taxon>
        <taxon>Mammalia</taxon>
        <taxon>Eutheria</taxon>
        <taxon>Euarchontoglires</taxon>
        <taxon>Glires</taxon>
        <taxon>Rodentia</taxon>
        <taxon>Myomorpha</taxon>
        <taxon>Muroidea</taxon>
        <taxon>Muridae</taxon>
        <taxon>Murinae</taxon>
        <taxon>Rattus</taxon>
    </lineage>
</organism>